<organism>
    <name type="scientific">Cuscuta gronovii</name>
    <name type="common">Common dodder</name>
    <name type="synonym">Epithymum gronovii</name>
    <dbReference type="NCBI Taxonomy" id="35886"/>
    <lineage>
        <taxon>Eukaryota</taxon>
        <taxon>Viridiplantae</taxon>
        <taxon>Streptophyta</taxon>
        <taxon>Embryophyta</taxon>
        <taxon>Tracheophyta</taxon>
        <taxon>Spermatophyta</taxon>
        <taxon>Magnoliopsida</taxon>
        <taxon>eudicotyledons</taxon>
        <taxon>Gunneridae</taxon>
        <taxon>Pentapetalae</taxon>
        <taxon>asterids</taxon>
        <taxon>lamiids</taxon>
        <taxon>Solanales</taxon>
        <taxon>Convolvulaceae</taxon>
        <taxon>Cuscuteae</taxon>
        <taxon>Cuscuta</taxon>
        <taxon>Cuscuta subgen. Grammica</taxon>
        <taxon>Cuscuta sect. Oxycarpae</taxon>
    </lineage>
</organism>
<protein>
    <recommendedName>
        <fullName evidence="2">Large ribosomal subunit protein uL2c</fullName>
    </recommendedName>
    <alternativeName>
        <fullName evidence="4">50S ribosomal protein L2, plastid</fullName>
    </alternativeName>
</protein>
<sequence length="270" mass="29609">MIIKLYKIEPTSTLTRNGTSQAKPKNLISGKRNCGKGRNANGIITIRHRGGGHKRLCRKINFKRNEKDISGKIKTIEYDPNRNAYICLIHYVNGEKWYILHPRGALIGDTIISGPEVSIKIGNSLPLNEIPLGTSLHNLEITRGKGGQLARAAGAAAKLIAKEGQSATLKLPSGELRFISKQCSATVGQVGNIGVNQKSLGKAGVKRWLGKRPIVRGLVMNPIDHPHGGGEGRAPIGRNQPKTPWGYPALGKKTRRKNKYSNKFILRHRM</sequence>
<evidence type="ECO:0000250" key="1"/>
<evidence type="ECO:0000255" key="2">
    <source>
        <dbReference type="HAMAP-Rule" id="MF_01320"/>
    </source>
</evidence>
<evidence type="ECO:0000256" key="3">
    <source>
        <dbReference type="SAM" id="MobiDB-lite"/>
    </source>
</evidence>
<evidence type="ECO:0000305" key="4"/>
<comment type="subunit">
    <text evidence="1">Part of the 50S ribosomal subunit.</text>
</comment>
<comment type="subcellular location">
    <subcellularLocation>
        <location>Plastid</location>
    </subcellularLocation>
</comment>
<comment type="similarity">
    <text evidence="4">Belongs to the universal ribosomal protein uL2 family.</text>
</comment>
<comment type="caution">
    <text evidence="4">Young tissue from this organism is photosynthetic and contains some thylakoids, although the photosynthetic activity does not exceed the light compensation point.</text>
</comment>
<accession>A7M937</accession>
<geneLocation type="plastid"/>
<reference key="1">
    <citation type="journal article" date="2007" name="BMC Plant Biol.">
        <title>Complete DNA sequences of the plastid genomes of two parasitic flowering plant species, Cuscuta reflexa and Cuscuta gronovii.</title>
        <authorList>
            <person name="Funk H.T."/>
            <person name="Berg S."/>
            <person name="Krupinska K."/>
            <person name="Maier U.-G."/>
            <person name="Krause K."/>
        </authorList>
    </citation>
    <scope>NUCLEOTIDE SEQUENCE [LARGE SCALE GENOMIC DNA]</scope>
</reference>
<keyword id="KW-0934">Plastid</keyword>
<keyword id="KW-0687">Ribonucleoprotein</keyword>
<keyword id="KW-0689">Ribosomal protein</keyword>
<feature type="chain" id="PRO_0000310072" description="Large ribosomal subunit protein uL2c">
    <location>
        <begin position="1"/>
        <end position="270"/>
    </location>
</feature>
<feature type="region of interest" description="Disordered" evidence="3">
    <location>
        <begin position="221"/>
        <end position="245"/>
    </location>
</feature>
<proteinExistence type="inferred from homology"/>
<name>RK2_CUSGR</name>
<dbReference type="EMBL" id="AM711639">
    <property type="protein sequence ID" value="CAM98365.1"/>
    <property type="molecule type" value="Genomic_DNA"/>
</dbReference>
<dbReference type="RefSeq" id="YP_001430078.1">
    <property type="nucleotide sequence ID" value="NC_009765.1"/>
</dbReference>
<dbReference type="SMR" id="A7M937"/>
<dbReference type="GeneID" id="5536729"/>
<dbReference type="GO" id="GO:0005762">
    <property type="term" value="C:mitochondrial large ribosomal subunit"/>
    <property type="evidence" value="ECO:0007669"/>
    <property type="project" value="TreeGrafter"/>
</dbReference>
<dbReference type="GO" id="GO:0009536">
    <property type="term" value="C:plastid"/>
    <property type="evidence" value="ECO:0007669"/>
    <property type="project" value="UniProtKB-SubCell"/>
</dbReference>
<dbReference type="GO" id="GO:0003723">
    <property type="term" value="F:RNA binding"/>
    <property type="evidence" value="ECO:0007669"/>
    <property type="project" value="InterPro"/>
</dbReference>
<dbReference type="GO" id="GO:0003735">
    <property type="term" value="F:structural constituent of ribosome"/>
    <property type="evidence" value="ECO:0007669"/>
    <property type="project" value="InterPro"/>
</dbReference>
<dbReference type="GO" id="GO:0016740">
    <property type="term" value="F:transferase activity"/>
    <property type="evidence" value="ECO:0007669"/>
    <property type="project" value="InterPro"/>
</dbReference>
<dbReference type="GO" id="GO:0032543">
    <property type="term" value="P:mitochondrial translation"/>
    <property type="evidence" value="ECO:0007669"/>
    <property type="project" value="TreeGrafter"/>
</dbReference>
<dbReference type="FunFam" id="4.10.950.10:FF:000001">
    <property type="entry name" value="50S ribosomal protein L2"/>
    <property type="match status" value="1"/>
</dbReference>
<dbReference type="FunFam" id="2.30.30.30:FF:000008">
    <property type="entry name" value="50S ribosomal protein L2, chloroplastic"/>
    <property type="match status" value="1"/>
</dbReference>
<dbReference type="FunFam" id="2.40.50.140:FF:000029">
    <property type="entry name" value="50S ribosomal protein L2, chloroplastic"/>
    <property type="match status" value="1"/>
</dbReference>
<dbReference type="Gene3D" id="2.30.30.30">
    <property type="match status" value="1"/>
</dbReference>
<dbReference type="Gene3D" id="2.40.50.140">
    <property type="entry name" value="Nucleic acid-binding proteins"/>
    <property type="match status" value="1"/>
</dbReference>
<dbReference type="Gene3D" id="4.10.950.10">
    <property type="entry name" value="Ribosomal protein L2, domain 3"/>
    <property type="match status" value="1"/>
</dbReference>
<dbReference type="HAMAP" id="MF_01320_B">
    <property type="entry name" value="Ribosomal_uL2_B"/>
    <property type="match status" value="1"/>
</dbReference>
<dbReference type="InterPro" id="IPR012340">
    <property type="entry name" value="NA-bd_OB-fold"/>
</dbReference>
<dbReference type="InterPro" id="IPR014722">
    <property type="entry name" value="Rib_uL2_dom2"/>
</dbReference>
<dbReference type="InterPro" id="IPR002171">
    <property type="entry name" value="Ribosomal_uL2"/>
</dbReference>
<dbReference type="InterPro" id="IPR005880">
    <property type="entry name" value="Ribosomal_uL2_bac/org-type"/>
</dbReference>
<dbReference type="InterPro" id="IPR022669">
    <property type="entry name" value="Ribosomal_uL2_C"/>
</dbReference>
<dbReference type="InterPro" id="IPR014726">
    <property type="entry name" value="Ribosomal_uL2_dom3"/>
</dbReference>
<dbReference type="InterPro" id="IPR022666">
    <property type="entry name" value="Ribosomal_uL2_RNA-bd_dom"/>
</dbReference>
<dbReference type="InterPro" id="IPR008991">
    <property type="entry name" value="Translation_prot_SH3-like_sf"/>
</dbReference>
<dbReference type="NCBIfam" id="TIGR01171">
    <property type="entry name" value="rplB_bact"/>
    <property type="match status" value="1"/>
</dbReference>
<dbReference type="PANTHER" id="PTHR13691:SF5">
    <property type="entry name" value="LARGE RIBOSOMAL SUBUNIT PROTEIN UL2M"/>
    <property type="match status" value="1"/>
</dbReference>
<dbReference type="PANTHER" id="PTHR13691">
    <property type="entry name" value="RIBOSOMAL PROTEIN L2"/>
    <property type="match status" value="1"/>
</dbReference>
<dbReference type="Pfam" id="PF00181">
    <property type="entry name" value="Ribosomal_L2"/>
    <property type="match status" value="1"/>
</dbReference>
<dbReference type="Pfam" id="PF03947">
    <property type="entry name" value="Ribosomal_L2_C"/>
    <property type="match status" value="1"/>
</dbReference>
<dbReference type="PIRSF" id="PIRSF002158">
    <property type="entry name" value="Ribosomal_L2"/>
    <property type="match status" value="1"/>
</dbReference>
<dbReference type="SMART" id="SM01383">
    <property type="entry name" value="Ribosomal_L2"/>
    <property type="match status" value="1"/>
</dbReference>
<dbReference type="SMART" id="SM01382">
    <property type="entry name" value="Ribosomal_L2_C"/>
    <property type="match status" value="1"/>
</dbReference>
<dbReference type="SUPFAM" id="SSF50249">
    <property type="entry name" value="Nucleic acid-binding proteins"/>
    <property type="match status" value="1"/>
</dbReference>
<dbReference type="SUPFAM" id="SSF50104">
    <property type="entry name" value="Translation proteins SH3-like domain"/>
    <property type="match status" value="1"/>
</dbReference>
<gene>
    <name type="primary">rpl2</name>
</gene>